<comment type="function">
    <text evidence="1">Transposase responsible for transposition an insertion sequence (IS) element. Transposition occurs in 2 main steps, excision from the donor DNA 'top strand' into a single strand circle and its subsequent reinsertion into the DNA target. This increases the copy number of the IS.</text>
</comment>
<comment type="cofactor">
    <cofactor evidence="1">
        <name>Mg(2+)</name>
        <dbReference type="ChEBI" id="CHEBI:18420"/>
    </cofactor>
</comment>
<comment type="subunit">
    <text evidence="1">Homodimer.</text>
</comment>
<comment type="similarity">
    <text evidence="2">Belongs to the transposase 17 family. RAYT subfamily.</text>
</comment>
<sequence length="176" mass="21403">MSNYRRDFTKGGLYFFTIVLQDRTKSYLTDYINEFRSAYKQTCEHYPFETVAICILPDHIHLLMQLPENDDNYAIRIAYLKTQFTRQLPKECRQFNKNRQKYRESGIWQRRFWEHLIRDDKDLANHLDYIYYNPVKHGYVEVVKDWPYSSFHRDVKAEIYPEDWGGNPDLKIKGDI</sequence>
<name>Y217_HAEIN</name>
<keyword id="KW-0233">DNA recombination</keyword>
<keyword id="KW-0238">DNA-binding</keyword>
<keyword id="KW-0255">Endonuclease</keyword>
<keyword id="KW-0378">Hydrolase</keyword>
<keyword id="KW-0460">Magnesium</keyword>
<keyword id="KW-0479">Metal-binding</keyword>
<keyword id="KW-0540">Nuclease</keyword>
<keyword id="KW-1185">Reference proteome</keyword>
<keyword id="KW-0814">Transposable element</keyword>
<keyword id="KW-0815">Transposition</keyword>
<feature type="chain" id="PRO_0000168537" description="Putative REP-associated tyrosine transposase">
    <location>
        <begin position="1"/>
        <end position="176"/>
    </location>
</feature>
<feature type="active site" description="Nucleophile" evidence="1">
    <location>
        <position position="148"/>
    </location>
</feature>
<feature type="binding site" evidence="1">
    <location>
        <position position="59"/>
    </location>
    <ligand>
        <name>Mg(2+)</name>
        <dbReference type="ChEBI" id="CHEBI:18420"/>
    </ligand>
</feature>
<feature type="binding site" evidence="1">
    <location>
        <position position="61"/>
    </location>
    <ligand>
        <name>Mg(2+)</name>
        <dbReference type="ChEBI" id="CHEBI:18420"/>
    </ligand>
</feature>
<gene>
    <name type="ordered locus">HI_0217</name>
</gene>
<evidence type="ECO:0000250" key="1">
    <source>
        <dbReference type="UniProtKB" id="Q7DF83"/>
    </source>
</evidence>
<evidence type="ECO:0000305" key="2"/>
<dbReference type="EMBL" id="L42023">
    <property type="protein sequence ID" value="AAC21884.1"/>
    <property type="molecule type" value="Genomic_DNA"/>
</dbReference>
<dbReference type="PIR" id="A64004">
    <property type="entry name" value="A64004"/>
</dbReference>
<dbReference type="RefSeq" id="NP_438385.1">
    <property type="nucleotide sequence ID" value="NC_000907.1"/>
</dbReference>
<dbReference type="SMR" id="P43965"/>
<dbReference type="STRING" id="71421.HI_0217"/>
<dbReference type="DNASU" id="951128"/>
<dbReference type="EnsemblBacteria" id="AAC21884">
    <property type="protein sequence ID" value="AAC21884"/>
    <property type="gene ID" value="HI_0217"/>
</dbReference>
<dbReference type="KEGG" id="hin:HI_0217"/>
<dbReference type="PATRIC" id="fig|71421.8.peg.225"/>
<dbReference type="eggNOG" id="COG1943">
    <property type="taxonomic scope" value="Bacteria"/>
</dbReference>
<dbReference type="HOGENOM" id="CLU_068226_6_0_6"/>
<dbReference type="OrthoDB" id="9794403at2"/>
<dbReference type="PhylomeDB" id="P43965"/>
<dbReference type="BioCyc" id="HINF71421:G1GJ1-227-MONOMER"/>
<dbReference type="Proteomes" id="UP000000579">
    <property type="component" value="Chromosome"/>
</dbReference>
<dbReference type="GO" id="GO:0004519">
    <property type="term" value="F:endonuclease activity"/>
    <property type="evidence" value="ECO:0007669"/>
    <property type="project" value="UniProtKB-KW"/>
</dbReference>
<dbReference type="GO" id="GO:0046872">
    <property type="term" value="F:metal ion binding"/>
    <property type="evidence" value="ECO:0007669"/>
    <property type="project" value="UniProtKB-KW"/>
</dbReference>
<dbReference type="GO" id="GO:0043565">
    <property type="term" value="F:sequence-specific DNA binding"/>
    <property type="evidence" value="ECO:0000318"/>
    <property type="project" value="GO_Central"/>
</dbReference>
<dbReference type="GO" id="GO:0004803">
    <property type="term" value="F:transposase activity"/>
    <property type="evidence" value="ECO:0007669"/>
    <property type="project" value="InterPro"/>
</dbReference>
<dbReference type="GO" id="GO:0006310">
    <property type="term" value="P:DNA recombination"/>
    <property type="evidence" value="ECO:0000318"/>
    <property type="project" value="GO_Central"/>
</dbReference>
<dbReference type="GO" id="GO:0006313">
    <property type="term" value="P:DNA transposition"/>
    <property type="evidence" value="ECO:0007669"/>
    <property type="project" value="InterPro"/>
</dbReference>
<dbReference type="FunFam" id="3.30.70.1290:FF:000001">
    <property type="entry name" value="REP-associated tyrosine transposase"/>
    <property type="match status" value="1"/>
</dbReference>
<dbReference type="Gene3D" id="3.30.70.1290">
    <property type="entry name" value="Transposase IS200-like"/>
    <property type="match status" value="1"/>
</dbReference>
<dbReference type="InterPro" id="IPR052715">
    <property type="entry name" value="RAYT_transposase"/>
</dbReference>
<dbReference type="InterPro" id="IPR002686">
    <property type="entry name" value="Transposase_17"/>
</dbReference>
<dbReference type="InterPro" id="IPR036515">
    <property type="entry name" value="Transposase_17_sf"/>
</dbReference>
<dbReference type="NCBIfam" id="NF047646">
    <property type="entry name" value="REP_Tyr_transpos"/>
    <property type="match status" value="1"/>
</dbReference>
<dbReference type="PANTHER" id="PTHR36966">
    <property type="entry name" value="REP-ASSOCIATED TYROSINE TRANSPOSASE"/>
    <property type="match status" value="1"/>
</dbReference>
<dbReference type="PANTHER" id="PTHR36966:SF1">
    <property type="entry name" value="REP-ASSOCIATED TYROSINE TRANSPOSASE"/>
    <property type="match status" value="1"/>
</dbReference>
<dbReference type="Pfam" id="PF01797">
    <property type="entry name" value="Y1_Tnp"/>
    <property type="match status" value="1"/>
</dbReference>
<dbReference type="SMART" id="SM01321">
    <property type="entry name" value="Y1_Tnp"/>
    <property type="match status" value="1"/>
</dbReference>
<dbReference type="SUPFAM" id="SSF143422">
    <property type="entry name" value="Transposase IS200-like"/>
    <property type="match status" value="1"/>
</dbReference>
<reference key="1">
    <citation type="journal article" date="1995" name="Science">
        <title>Whole-genome random sequencing and assembly of Haemophilus influenzae Rd.</title>
        <authorList>
            <person name="Fleischmann R.D."/>
            <person name="Adams M.D."/>
            <person name="White O."/>
            <person name="Clayton R.A."/>
            <person name="Kirkness E.F."/>
            <person name="Kerlavage A.R."/>
            <person name="Bult C.J."/>
            <person name="Tomb J.-F."/>
            <person name="Dougherty B.A."/>
            <person name="Merrick J.M."/>
            <person name="McKenney K."/>
            <person name="Sutton G.G."/>
            <person name="FitzHugh W."/>
            <person name="Fields C.A."/>
            <person name="Gocayne J.D."/>
            <person name="Scott J.D."/>
            <person name="Shirley R."/>
            <person name="Liu L.-I."/>
            <person name="Glodek A."/>
            <person name="Kelley J.M."/>
            <person name="Weidman J.F."/>
            <person name="Phillips C.A."/>
            <person name="Spriggs T."/>
            <person name="Hedblom E."/>
            <person name="Cotton M.D."/>
            <person name="Utterback T.R."/>
            <person name="Hanna M.C."/>
            <person name="Nguyen D.T."/>
            <person name="Saudek D.M."/>
            <person name="Brandon R.C."/>
            <person name="Fine L.D."/>
            <person name="Fritchman J.L."/>
            <person name="Fuhrmann J.L."/>
            <person name="Geoghagen N.S.M."/>
            <person name="Gnehm C.L."/>
            <person name="McDonald L.A."/>
            <person name="Small K.V."/>
            <person name="Fraser C.M."/>
            <person name="Smith H.O."/>
            <person name="Venter J.C."/>
        </authorList>
    </citation>
    <scope>NUCLEOTIDE SEQUENCE [LARGE SCALE GENOMIC DNA]</scope>
    <source>
        <strain>ATCC 51907 / DSM 11121 / KW20 / Rd</strain>
    </source>
</reference>
<proteinExistence type="inferred from homology"/>
<protein>
    <recommendedName>
        <fullName>Putative REP-associated tyrosine transposase</fullName>
    </recommendedName>
</protein>
<accession>P43965</accession>
<organism>
    <name type="scientific">Haemophilus influenzae (strain ATCC 51907 / DSM 11121 / KW20 / Rd)</name>
    <dbReference type="NCBI Taxonomy" id="71421"/>
    <lineage>
        <taxon>Bacteria</taxon>
        <taxon>Pseudomonadati</taxon>
        <taxon>Pseudomonadota</taxon>
        <taxon>Gammaproteobacteria</taxon>
        <taxon>Pasteurellales</taxon>
        <taxon>Pasteurellaceae</taxon>
        <taxon>Haemophilus</taxon>
    </lineage>
</organism>